<name>SEC16_PICGU</name>
<reference key="1">
    <citation type="journal article" date="2009" name="Nature">
        <title>Evolution of pathogenicity and sexual reproduction in eight Candida genomes.</title>
        <authorList>
            <person name="Butler G."/>
            <person name="Rasmussen M.D."/>
            <person name="Lin M.F."/>
            <person name="Santos M.A.S."/>
            <person name="Sakthikumar S."/>
            <person name="Munro C.A."/>
            <person name="Rheinbay E."/>
            <person name="Grabherr M."/>
            <person name="Forche A."/>
            <person name="Reedy J.L."/>
            <person name="Agrafioti I."/>
            <person name="Arnaud M.B."/>
            <person name="Bates S."/>
            <person name="Brown A.J.P."/>
            <person name="Brunke S."/>
            <person name="Costanzo M.C."/>
            <person name="Fitzpatrick D.A."/>
            <person name="de Groot P.W.J."/>
            <person name="Harris D."/>
            <person name="Hoyer L.L."/>
            <person name="Hube B."/>
            <person name="Klis F.M."/>
            <person name="Kodira C."/>
            <person name="Lennard N."/>
            <person name="Logue M.E."/>
            <person name="Martin R."/>
            <person name="Neiman A.M."/>
            <person name="Nikolaou E."/>
            <person name="Quail M.A."/>
            <person name="Quinn J."/>
            <person name="Santos M.C."/>
            <person name="Schmitzberger F.F."/>
            <person name="Sherlock G."/>
            <person name="Shah P."/>
            <person name="Silverstein K.A.T."/>
            <person name="Skrzypek M.S."/>
            <person name="Soll D."/>
            <person name="Staggs R."/>
            <person name="Stansfield I."/>
            <person name="Stumpf M.P.H."/>
            <person name="Sudbery P.E."/>
            <person name="Srikantha T."/>
            <person name="Zeng Q."/>
            <person name="Berman J."/>
            <person name="Berriman M."/>
            <person name="Heitman J."/>
            <person name="Gow N.A.R."/>
            <person name="Lorenz M.C."/>
            <person name="Birren B.W."/>
            <person name="Kellis M."/>
            <person name="Cuomo C.A."/>
        </authorList>
    </citation>
    <scope>NUCLEOTIDE SEQUENCE [LARGE SCALE GENOMIC DNA]</scope>
    <source>
        <strain>ATCC 6260 / CBS 566 / DSM 6381 / JCM 1539 / NBRC 10279 / NRRL Y-324</strain>
    </source>
</reference>
<organism>
    <name type="scientific">Meyerozyma guilliermondii (strain ATCC 6260 / CBS 566 / DSM 6381 / JCM 1539 / NBRC 10279 / NRRL Y-324)</name>
    <name type="common">Yeast</name>
    <name type="synonym">Candida guilliermondii</name>
    <dbReference type="NCBI Taxonomy" id="294746"/>
    <lineage>
        <taxon>Eukaryota</taxon>
        <taxon>Fungi</taxon>
        <taxon>Dikarya</taxon>
        <taxon>Ascomycota</taxon>
        <taxon>Saccharomycotina</taxon>
        <taxon>Pichiomycetes</taxon>
        <taxon>Debaryomycetaceae</taxon>
        <taxon>Meyerozyma</taxon>
    </lineage>
</organism>
<comment type="function">
    <text evidence="1">Involved in the initiation of assembly of the COPII coat required for the formation of transport vesicles from the endoplasmic reticulum (ER) and the selection of cargo molecules. Also involved in autophagy (By similarity).</text>
</comment>
<comment type="subcellular location">
    <subcellularLocation>
        <location evidence="1">Endoplasmic reticulum membrane</location>
        <topology evidence="1">Peripheral membrane protein</topology>
        <orientation evidence="1">Cytoplasmic side</orientation>
    </subcellularLocation>
</comment>
<comment type="similarity">
    <text evidence="3">Belongs to the SEC16 family.</text>
</comment>
<sequence>MESDAGAQQPPEASENSNMYGGYQTETESDPLVYKSDNNHNPGSTNLDGPNSIVAQTEPNAVSERRTSVLQQADDVLPRHSSIDDAIASVARQSAGFSEDFLRRDSRVSASHSSHNEAGHHADSEQLETRLPVPENVQEHNNVSNTENHESTGAPADDSFFSELASRPETSEQFFSTHAQEEITPLVDPLQEVDERRESFPWEESKEGADFFSSLGNSEHNQTPASGTEEHEQSHVSTSFNEEETAITHGNEESIPWPSYDENSHEAHAQHTSEGAQETDSVAPSAHTVHESDSTPTPKPDSTNELDELFAGDDDDFLQEIVKDQEPVTSNGNQDTKTPSSQEPEPAEESQVKKKDSFAFLELDDDLLLDDDLLPDEEDEGEINSNATVVQPQTTTTSRYSRPSQPTSTSSSFSKPVAAQEFNKKLEEAKKKHDAYDFPSNLLHSSIKPAPRTNNKYAAPSGSAGSPNSASASAPPPSSTTSLPLHPQAAPGVAQENRPPLQSHSSAPNQAPSKSPAKKSFFEELPIPTPRAAVRPARSGPSKPSPVTAKPAVGQAQKKPTQPPVNPYAMQNLKTPSAASSPASAVPQVTLPNAPVGPVPPVAPIGGVVAPGPFSDMASVAPLPQSAPQNSLSATPNTTSQPRKLSNAGSSPYVPKVGPYGPSGHTRHHSRASSLVGAKGKEVNPYAPALSPVNASGGQMSPQNQASSLSAVAPPTAHSSATASRLRRISNPRSIYGNAVAQQLKPVDPNIRFQKQFPIFNWGLNNNVSMIPKNMQRNINIKQLTGGAFTEILKSFPGPLSKKSKAKDVEKWLKTKVTHLDSSTPNVATNEAKLSDEVGEILAALVASNGDVRSQEFISTACSVLNPHHYSQVEAMATPQGSNHSATAYKLDNSGSNQLLTYCQAGQTDRALELCVAAGDWALALIISHSMGPQAFGKTASDFARTSYPFQKSQSKLNHLMPIILKVFSGNVKSIIEDFQNVATELEWVLLHWRDVVTSIAANAIQNGKVNEFLNEFGQLLASHGNFIGRDVCFILTGAPLSPSFSVVGGDSQMGLFYTEIYEYALSQRSAATANTLLPTLSVKLHHAQLLADYGLNVDSQRYCDQIGASLKTTKQQVPPAIIHEFQRLLVRVSDTGANDQSWYGGIGKINKMWGQLDKLISGDENTEKKGETGLFSKFSPSVSRNASTTDIHALDRPEFHSMVSSMSAPITPGEQYGRTPSSVAPVTSLSGVSSSQTSNPLTSVPRYAPPAKNSRPQQSPQQPTRSHDMAPHSGSRYAPSNASSSNLGNPEEAIQSRKPPSKYSRPAQVGAAFSYNNPVAEASSSSIGSYGSHAVPNPPPATQGHTKQPSFNSIVSNDYSVIRDHNRSPSVQSDISLDYPVDFRERIAESKQESEENADIKQLNEIPTNGNGNENTQAQSSKDQSSPLPYANQSGTTMDSTEVASQQSQQPPPPPPKLTQTPTQSPSRGPPPAVSRSPSQPPKANPYAPGARTNKPRGRNRYGPPSALGSNAPSVPEVNGNRASEEPKNVNPKVHEEKTSNIDDSFTSSYQEDTQMSSPSLMLNHNQGAINQTERPNSKFGLGDEFPIPGSPEVTTRANSVYGGHGGFFSSRLSQSQQSTMYQQYEVTDDTVQDYVPVVEEEDEEEDAPKSQSSQPAQNGSKSAANAKGQTGLFSIFGMRKNDGKPKPIRAKMGEPMKLVYDEEMKAWIDPSIPRDQQLKKAAPPPPPKMKTSAKPSNVPSVGEAPSQQHTPQTGPVLPPGNSSGPTPKPIGSGPKPPAPRAGTKPQLANANLDDLLSLSSQPGAAGRKPKRGARRGYVNVMEQ</sequence>
<gene>
    <name type="primary">SEC16</name>
    <name type="ORF">PGUG_02570</name>
</gene>
<proteinExistence type="inferred from homology"/>
<protein>
    <recommendedName>
        <fullName>COPII coat assembly protein SEC16</fullName>
    </recommendedName>
    <alternativeName>
        <fullName>Protein transport protein SEC16</fullName>
    </alternativeName>
</protein>
<dbReference type="EMBL" id="CH408157">
    <property type="protein sequence ID" value="EDK38472.2"/>
    <property type="molecule type" value="Genomic_DNA"/>
</dbReference>
<dbReference type="RefSeq" id="XP_001484841.1">
    <property type="nucleotide sequence ID" value="XM_001484791.1"/>
</dbReference>
<dbReference type="SMR" id="A5DH19"/>
<dbReference type="FunCoup" id="A5DH19">
    <property type="interactions" value="97"/>
</dbReference>
<dbReference type="STRING" id="294746.A5DH19"/>
<dbReference type="GeneID" id="5127136"/>
<dbReference type="KEGG" id="pgu:PGUG_02570"/>
<dbReference type="VEuPathDB" id="FungiDB:PGUG_02570"/>
<dbReference type="eggNOG" id="KOG1913">
    <property type="taxonomic scope" value="Eukaryota"/>
</dbReference>
<dbReference type="HOGENOM" id="CLU_232483_0_0_1"/>
<dbReference type="InParanoid" id="A5DH19"/>
<dbReference type="OMA" id="HNENTVE"/>
<dbReference type="OrthoDB" id="8918678at2759"/>
<dbReference type="Proteomes" id="UP000001997">
    <property type="component" value="Unassembled WGS sequence"/>
</dbReference>
<dbReference type="GO" id="GO:0070971">
    <property type="term" value="C:endoplasmic reticulum exit site"/>
    <property type="evidence" value="ECO:0007669"/>
    <property type="project" value="UniProtKB-ARBA"/>
</dbReference>
<dbReference type="GO" id="GO:0005789">
    <property type="term" value="C:endoplasmic reticulum membrane"/>
    <property type="evidence" value="ECO:0007669"/>
    <property type="project" value="UniProtKB-SubCell"/>
</dbReference>
<dbReference type="GO" id="GO:0012507">
    <property type="term" value="C:ER to Golgi transport vesicle membrane"/>
    <property type="evidence" value="ECO:0007669"/>
    <property type="project" value="TreeGrafter"/>
</dbReference>
<dbReference type="GO" id="GO:0006914">
    <property type="term" value="P:autophagy"/>
    <property type="evidence" value="ECO:0007669"/>
    <property type="project" value="UniProtKB-KW"/>
</dbReference>
<dbReference type="GO" id="GO:0007030">
    <property type="term" value="P:Golgi organization"/>
    <property type="evidence" value="ECO:0007669"/>
    <property type="project" value="TreeGrafter"/>
</dbReference>
<dbReference type="GO" id="GO:0046907">
    <property type="term" value="P:intracellular transport"/>
    <property type="evidence" value="ECO:0007669"/>
    <property type="project" value="UniProtKB-ARBA"/>
</dbReference>
<dbReference type="GO" id="GO:0070973">
    <property type="term" value="P:protein localization to endoplasmic reticulum exit site"/>
    <property type="evidence" value="ECO:0007669"/>
    <property type="project" value="TreeGrafter"/>
</dbReference>
<dbReference type="GO" id="GO:0015031">
    <property type="term" value="P:protein transport"/>
    <property type="evidence" value="ECO:0007669"/>
    <property type="project" value="UniProtKB-KW"/>
</dbReference>
<dbReference type="GO" id="GO:0016192">
    <property type="term" value="P:vesicle-mediated transport"/>
    <property type="evidence" value="ECO:0007669"/>
    <property type="project" value="UniProtKB-KW"/>
</dbReference>
<dbReference type="CDD" id="cd09233">
    <property type="entry name" value="ACE1-Sec16-like"/>
    <property type="match status" value="1"/>
</dbReference>
<dbReference type="Gene3D" id="1.20.58.940">
    <property type="match status" value="1"/>
</dbReference>
<dbReference type="InterPro" id="IPR024340">
    <property type="entry name" value="Sec16_CCD"/>
</dbReference>
<dbReference type="InterPro" id="IPR024298">
    <property type="entry name" value="Sec16_Sec23-bd"/>
</dbReference>
<dbReference type="PANTHER" id="PTHR13402">
    <property type="entry name" value="RGPR-RELATED"/>
    <property type="match status" value="1"/>
</dbReference>
<dbReference type="PANTHER" id="PTHR13402:SF6">
    <property type="entry name" value="SECRETORY 16, ISOFORM I"/>
    <property type="match status" value="1"/>
</dbReference>
<dbReference type="Pfam" id="PF12932">
    <property type="entry name" value="Sec16"/>
    <property type="match status" value="1"/>
</dbReference>
<dbReference type="Pfam" id="PF12931">
    <property type="entry name" value="TPR_Sec16"/>
    <property type="match status" value="1"/>
</dbReference>
<evidence type="ECO:0000250" key="1"/>
<evidence type="ECO:0000256" key="2">
    <source>
        <dbReference type="SAM" id="MobiDB-lite"/>
    </source>
</evidence>
<evidence type="ECO:0000305" key="3"/>
<keyword id="KW-0072">Autophagy</keyword>
<keyword id="KW-0256">Endoplasmic reticulum</keyword>
<keyword id="KW-0931">ER-Golgi transport</keyword>
<keyword id="KW-0472">Membrane</keyword>
<keyword id="KW-0653">Protein transport</keyword>
<keyword id="KW-1185">Reference proteome</keyword>
<keyword id="KW-0813">Transport</keyword>
<feature type="chain" id="PRO_0000295542" description="COPII coat assembly protein SEC16">
    <location>
        <begin position="1"/>
        <end position="1825"/>
    </location>
</feature>
<feature type="region of interest" description="Disordered" evidence="2">
    <location>
        <begin position="1"/>
        <end position="67"/>
    </location>
</feature>
<feature type="region of interest" description="Disordered" evidence="2">
    <location>
        <begin position="106"/>
        <end position="356"/>
    </location>
</feature>
<feature type="region of interest" description="Disordered" evidence="2">
    <location>
        <begin position="371"/>
        <end position="590"/>
    </location>
</feature>
<feature type="region of interest" description="Disordered" evidence="2">
    <location>
        <begin position="620"/>
        <end position="675"/>
    </location>
</feature>
<feature type="region of interest" description="Disordered" evidence="2">
    <location>
        <begin position="687"/>
        <end position="726"/>
    </location>
</feature>
<feature type="region of interest" description="Disordered" evidence="2">
    <location>
        <begin position="1165"/>
        <end position="1188"/>
    </location>
</feature>
<feature type="region of interest" description="Disordered" evidence="2">
    <location>
        <begin position="1206"/>
        <end position="1308"/>
    </location>
</feature>
<feature type="region of interest" description="Disordered" evidence="2">
    <location>
        <begin position="1322"/>
        <end position="1353"/>
    </location>
</feature>
<feature type="region of interest" description="Disordered" evidence="2">
    <location>
        <begin position="1387"/>
        <end position="1696"/>
    </location>
</feature>
<feature type="region of interest" description="Disordered" evidence="2">
    <location>
        <begin position="1712"/>
        <end position="1825"/>
    </location>
</feature>
<feature type="compositionally biased region" description="Polar residues" evidence="2">
    <location>
        <begin position="39"/>
        <end position="60"/>
    </location>
</feature>
<feature type="compositionally biased region" description="Basic and acidic residues" evidence="2">
    <location>
        <begin position="114"/>
        <end position="128"/>
    </location>
</feature>
<feature type="compositionally biased region" description="Basic and acidic residues" evidence="2">
    <location>
        <begin position="193"/>
        <end position="209"/>
    </location>
</feature>
<feature type="compositionally biased region" description="Polar residues" evidence="2">
    <location>
        <begin position="214"/>
        <end position="226"/>
    </location>
</feature>
<feature type="compositionally biased region" description="Basic and acidic residues" evidence="2">
    <location>
        <begin position="262"/>
        <end position="271"/>
    </location>
</feature>
<feature type="compositionally biased region" description="Polar residues" evidence="2">
    <location>
        <begin position="272"/>
        <end position="282"/>
    </location>
</feature>
<feature type="compositionally biased region" description="Polar residues" evidence="2">
    <location>
        <begin position="294"/>
        <end position="303"/>
    </location>
</feature>
<feature type="compositionally biased region" description="Acidic residues" evidence="2">
    <location>
        <begin position="304"/>
        <end position="318"/>
    </location>
</feature>
<feature type="compositionally biased region" description="Polar residues" evidence="2">
    <location>
        <begin position="327"/>
        <end position="338"/>
    </location>
</feature>
<feature type="compositionally biased region" description="Acidic residues" evidence="2">
    <location>
        <begin position="371"/>
        <end position="382"/>
    </location>
</feature>
<feature type="compositionally biased region" description="Low complexity" evidence="2">
    <location>
        <begin position="391"/>
        <end position="412"/>
    </location>
</feature>
<feature type="compositionally biased region" description="Basic and acidic residues" evidence="2">
    <location>
        <begin position="422"/>
        <end position="436"/>
    </location>
</feature>
<feature type="compositionally biased region" description="Low complexity" evidence="2">
    <location>
        <begin position="458"/>
        <end position="485"/>
    </location>
</feature>
<feature type="compositionally biased region" description="Polar residues" evidence="2">
    <location>
        <begin position="500"/>
        <end position="513"/>
    </location>
</feature>
<feature type="compositionally biased region" description="Low complexity" evidence="2">
    <location>
        <begin position="576"/>
        <end position="585"/>
    </location>
</feature>
<feature type="compositionally biased region" description="Polar residues" evidence="2">
    <location>
        <begin position="626"/>
        <end position="650"/>
    </location>
</feature>
<feature type="compositionally biased region" description="Polar residues" evidence="2">
    <location>
        <begin position="693"/>
        <end position="709"/>
    </location>
</feature>
<feature type="compositionally biased region" description="Low complexity" evidence="2">
    <location>
        <begin position="710"/>
        <end position="724"/>
    </location>
</feature>
<feature type="compositionally biased region" description="Polar residues" evidence="2">
    <location>
        <begin position="1179"/>
        <end position="1188"/>
    </location>
</feature>
<feature type="compositionally biased region" description="Low complexity" evidence="2">
    <location>
        <begin position="1227"/>
        <end position="1239"/>
    </location>
</feature>
<feature type="compositionally biased region" description="Low complexity" evidence="2">
    <location>
        <begin position="1255"/>
        <end position="1265"/>
    </location>
</feature>
<feature type="compositionally biased region" description="Polar residues" evidence="2">
    <location>
        <begin position="1279"/>
        <end position="1289"/>
    </location>
</feature>
<feature type="compositionally biased region" description="Low complexity" evidence="2">
    <location>
        <begin position="1324"/>
        <end position="1333"/>
    </location>
</feature>
<feature type="compositionally biased region" description="Polar residues" evidence="2">
    <location>
        <begin position="1344"/>
        <end position="1353"/>
    </location>
</feature>
<feature type="compositionally biased region" description="Polar residues" evidence="2">
    <location>
        <begin position="1406"/>
        <end position="1445"/>
    </location>
</feature>
<feature type="compositionally biased region" description="Low complexity" evidence="2">
    <location>
        <begin position="1459"/>
        <end position="1468"/>
    </location>
</feature>
<feature type="compositionally biased region" description="Pro residues" evidence="2">
    <location>
        <begin position="1469"/>
        <end position="1485"/>
    </location>
</feature>
<feature type="compositionally biased region" description="Basic and acidic residues" evidence="2">
    <location>
        <begin position="1524"/>
        <end position="1542"/>
    </location>
</feature>
<feature type="compositionally biased region" description="Polar residues" evidence="2">
    <location>
        <begin position="1543"/>
        <end position="1576"/>
    </location>
</feature>
<feature type="compositionally biased region" description="Low complexity" evidence="2">
    <location>
        <begin position="1611"/>
        <end position="1620"/>
    </location>
</feature>
<feature type="compositionally biased region" description="Polar residues" evidence="2">
    <location>
        <begin position="1651"/>
        <end position="1674"/>
    </location>
</feature>
<feature type="compositionally biased region" description="Basic and acidic residues" evidence="2">
    <location>
        <begin position="1681"/>
        <end position="1696"/>
    </location>
</feature>
<feature type="compositionally biased region" description="Low complexity" evidence="2">
    <location>
        <begin position="1789"/>
        <end position="1808"/>
    </location>
</feature>
<accession>A5DH19</accession>